<keyword id="KW-0002">3D-structure</keyword>
<keyword id="KW-0965">Cell junction</keyword>
<keyword id="KW-1003">Cell membrane</keyword>
<keyword id="KW-0903">Direct protein sequencing</keyword>
<keyword id="KW-1015">Disulfide bond</keyword>
<keyword id="KW-0325">Glycoprotein</keyword>
<keyword id="KW-0393">Immunoglobulin domain</keyword>
<keyword id="KW-0472">Membrane</keyword>
<keyword id="KW-1185">Reference proteome</keyword>
<keyword id="KW-0732">Signal</keyword>
<keyword id="KW-0796">Tight junction</keyword>
<keyword id="KW-0812">Transmembrane</keyword>
<keyword id="KW-1133">Transmembrane helix</keyword>
<reference key="1">
    <citation type="journal article" date="2000" name="J. Biol. Chem.">
        <title>Vascular endothelial junction-associated molecule, a novel member of the immunoglobulin superfamily, is localized to intercellular boundaries of endothelial cells.</title>
        <authorList>
            <person name="Palmeri D."/>
            <person name="van Zante A."/>
            <person name="Huang C.-C."/>
            <person name="Hemmerich S."/>
            <person name="Rosen S.D."/>
        </authorList>
    </citation>
    <scope>NUCLEOTIDE SEQUENCE [MRNA]</scope>
    <scope>PROTEIN SEQUENCE OF 29-33</scope>
    <source>
        <strain>C57BL/6J</strain>
    </source>
</reference>
<reference key="2">
    <citation type="journal article" date="2000" name="Curr. Top. Microbiol. Immunol.">
        <title>Cloning of JAM-2 and JAM-3: an emerging junctional adhesion molecular family?</title>
        <authorList>
            <person name="Aurrand-Lions M.A."/>
            <person name="Duncan L."/>
            <person name="Du Pasquier L."/>
            <person name="Imhof B.A."/>
        </authorList>
    </citation>
    <scope>NUCLEOTIDE SEQUENCE [MRNA]</scope>
    <scope>SUBCELLULAR LOCATION</scope>
</reference>
<reference key="3">
    <citation type="journal article" date="2005" name="Science">
        <title>The transcriptional landscape of the mammalian genome.</title>
        <authorList>
            <person name="Carninci P."/>
            <person name="Kasukawa T."/>
            <person name="Katayama S."/>
            <person name="Gough J."/>
            <person name="Frith M.C."/>
            <person name="Maeda N."/>
            <person name="Oyama R."/>
            <person name="Ravasi T."/>
            <person name="Lenhard B."/>
            <person name="Wells C."/>
            <person name="Kodzius R."/>
            <person name="Shimokawa K."/>
            <person name="Bajic V.B."/>
            <person name="Brenner S.E."/>
            <person name="Batalov S."/>
            <person name="Forrest A.R."/>
            <person name="Zavolan M."/>
            <person name="Davis M.J."/>
            <person name="Wilming L.G."/>
            <person name="Aidinis V."/>
            <person name="Allen J.E."/>
            <person name="Ambesi-Impiombato A."/>
            <person name="Apweiler R."/>
            <person name="Aturaliya R.N."/>
            <person name="Bailey T.L."/>
            <person name="Bansal M."/>
            <person name="Baxter L."/>
            <person name="Beisel K.W."/>
            <person name="Bersano T."/>
            <person name="Bono H."/>
            <person name="Chalk A.M."/>
            <person name="Chiu K.P."/>
            <person name="Choudhary V."/>
            <person name="Christoffels A."/>
            <person name="Clutterbuck D.R."/>
            <person name="Crowe M.L."/>
            <person name="Dalla E."/>
            <person name="Dalrymple B.P."/>
            <person name="de Bono B."/>
            <person name="Della Gatta G."/>
            <person name="di Bernardo D."/>
            <person name="Down T."/>
            <person name="Engstrom P."/>
            <person name="Fagiolini M."/>
            <person name="Faulkner G."/>
            <person name="Fletcher C.F."/>
            <person name="Fukushima T."/>
            <person name="Furuno M."/>
            <person name="Futaki S."/>
            <person name="Gariboldi M."/>
            <person name="Georgii-Hemming P."/>
            <person name="Gingeras T.R."/>
            <person name="Gojobori T."/>
            <person name="Green R.E."/>
            <person name="Gustincich S."/>
            <person name="Harbers M."/>
            <person name="Hayashi Y."/>
            <person name="Hensch T.K."/>
            <person name="Hirokawa N."/>
            <person name="Hill D."/>
            <person name="Huminiecki L."/>
            <person name="Iacono M."/>
            <person name="Ikeo K."/>
            <person name="Iwama A."/>
            <person name="Ishikawa T."/>
            <person name="Jakt M."/>
            <person name="Kanapin A."/>
            <person name="Katoh M."/>
            <person name="Kawasawa Y."/>
            <person name="Kelso J."/>
            <person name="Kitamura H."/>
            <person name="Kitano H."/>
            <person name="Kollias G."/>
            <person name="Krishnan S.P."/>
            <person name="Kruger A."/>
            <person name="Kummerfeld S.K."/>
            <person name="Kurochkin I.V."/>
            <person name="Lareau L.F."/>
            <person name="Lazarevic D."/>
            <person name="Lipovich L."/>
            <person name="Liu J."/>
            <person name="Liuni S."/>
            <person name="McWilliam S."/>
            <person name="Madan Babu M."/>
            <person name="Madera M."/>
            <person name="Marchionni L."/>
            <person name="Matsuda H."/>
            <person name="Matsuzawa S."/>
            <person name="Miki H."/>
            <person name="Mignone F."/>
            <person name="Miyake S."/>
            <person name="Morris K."/>
            <person name="Mottagui-Tabar S."/>
            <person name="Mulder N."/>
            <person name="Nakano N."/>
            <person name="Nakauchi H."/>
            <person name="Ng P."/>
            <person name="Nilsson R."/>
            <person name="Nishiguchi S."/>
            <person name="Nishikawa S."/>
            <person name="Nori F."/>
            <person name="Ohara O."/>
            <person name="Okazaki Y."/>
            <person name="Orlando V."/>
            <person name="Pang K.C."/>
            <person name="Pavan W.J."/>
            <person name="Pavesi G."/>
            <person name="Pesole G."/>
            <person name="Petrovsky N."/>
            <person name="Piazza S."/>
            <person name="Reed J."/>
            <person name="Reid J.F."/>
            <person name="Ring B.Z."/>
            <person name="Ringwald M."/>
            <person name="Rost B."/>
            <person name="Ruan Y."/>
            <person name="Salzberg S.L."/>
            <person name="Sandelin A."/>
            <person name="Schneider C."/>
            <person name="Schoenbach C."/>
            <person name="Sekiguchi K."/>
            <person name="Semple C.A."/>
            <person name="Seno S."/>
            <person name="Sessa L."/>
            <person name="Sheng Y."/>
            <person name="Shibata Y."/>
            <person name="Shimada H."/>
            <person name="Shimada K."/>
            <person name="Silva D."/>
            <person name="Sinclair B."/>
            <person name="Sperling S."/>
            <person name="Stupka E."/>
            <person name="Sugiura K."/>
            <person name="Sultana R."/>
            <person name="Takenaka Y."/>
            <person name="Taki K."/>
            <person name="Tammoja K."/>
            <person name="Tan S.L."/>
            <person name="Tang S."/>
            <person name="Taylor M.S."/>
            <person name="Tegner J."/>
            <person name="Teichmann S.A."/>
            <person name="Ueda H.R."/>
            <person name="van Nimwegen E."/>
            <person name="Verardo R."/>
            <person name="Wei C.L."/>
            <person name="Yagi K."/>
            <person name="Yamanishi H."/>
            <person name="Zabarovsky E."/>
            <person name="Zhu S."/>
            <person name="Zimmer A."/>
            <person name="Hide W."/>
            <person name="Bult C."/>
            <person name="Grimmond S.M."/>
            <person name="Teasdale R.D."/>
            <person name="Liu E.T."/>
            <person name="Brusic V."/>
            <person name="Quackenbush J."/>
            <person name="Wahlestedt C."/>
            <person name="Mattick J.S."/>
            <person name="Hume D.A."/>
            <person name="Kai C."/>
            <person name="Sasaki D."/>
            <person name="Tomaru Y."/>
            <person name="Fukuda S."/>
            <person name="Kanamori-Katayama M."/>
            <person name="Suzuki M."/>
            <person name="Aoki J."/>
            <person name="Arakawa T."/>
            <person name="Iida J."/>
            <person name="Imamura K."/>
            <person name="Itoh M."/>
            <person name="Kato T."/>
            <person name="Kawaji H."/>
            <person name="Kawagashira N."/>
            <person name="Kawashima T."/>
            <person name="Kojima M."/>
            <person name="Kondo S."/>
            <person name="Konno H."/>
            <person name="Nakano K."/>
            <person name="Ninomiya N."/>
            <person name="Nishio T."/>
            <person name="Okada M."/>
            <person name="Plessy C."/>
            <person name="Shibata K."/>
            <person name="Shiraki T."/>
            <person name="Suzuki S."/>
            <person name="Tagami M."/>
            <person name="Waki K."/>
            <person name="Watahiki A."/>
            <person name="Okamura-Oho Y."/>
            <person name="Suzuki H."/>
            <person name="Kawai J."/>
            <person name="Hayashizaki Y."/>
        </authorList>
    </citation>
    <scope>NUCLEOTIDE SEQUENCE [LARGE SCALE MRNA]</scope>
    <source>
        <strain>C57BL/6J</strain>
        <tissue>Head</tissue>
        <tissue>Medulla oblongata</tissue>
        <tissue>Skin</tissue>
    </source>
</reference>
<reference key="4">
    <citation type="journal article" date="2009" name="PLoS Biol.">
        <title>Lineage-specific biology revealed by a finished genome assembly of the mouse.</title>
        <authorList>
            <person name="Church D.M."/>
            <person name="Goodstadt L."/>
            <person name="Hillier L.W."/>
            <person name="Zody M.C."/>
            <person name="Goldstein S."/>
            <person name="She X."/>
            <person name="Bult C.J."/>
            <person name="Agarwala R."/>
            <person name="Cherry J.L."/>
            <person name="DiCuccio M."/>
            <person name="Hlavina W."/>
            <person name="Kapustin Y."/>
            <person name="Meric P."/>
            <person name="Maglott D."/>
            <person name="Birtle Z."/>
            <person name="Marques A.C."/>
            <person name="Graves T."/>
            <person name="Zhou S."/>
            <person name="Teague B."/>
            <person name="Potamousis K."/>
            <person name="Churas C."/>
            <person name="Place M."/>
            <person name="Herschleb J."/>
            <person name="Runnheim R."/>
            <person name="Forrest D."/>
            <person name="Amos-Landgraf J."/>
            <person name="Schwartz D.C."/>
            <person name="Cheng Z."/>
            <person name="Lindblad-Toh K."/>
            <person name="Eichler E.E."/>
            <person name="Ponting C.P."/>
        </authorList>
    </citation>
    <scope>NUCLEOTIDE SEQUENCE [LARGE SCALE GENOMIC DNA]</scope>
    <source>
        <strain>C57BL/6J</strain>
    </source>
</reference>
<reference key="5">
    <citation type="journal article" date="2004" name="Genome Res.">
        <title>The status, quality, and expansion of the NIH full-length cDNA project: the Mammalian Gene Collection (MGC).</title>
        <authorList>
            <consortium name="The MGC Project Team"/>
        </authorList>
    </citation>
    <scope>NUCLEOTIDE SEQUENCE [LARGE SCALE MRNA]</scope>
    <source>
        <strain>C57BL/6J</strain>
        <tissue>Mammary gland</tissue>
    </source>
</reference>
<reference key="6">
    <citation type="journal article" date="2003" name="Trends Immunol.">
        <title>Leukocyte-endothelial-cell interactions in leukocyte transmigration and the inflammatory response.</title>
        <authorList>
            <person name="Muller W.A."/>
        </authorList>
    </citation>
    <scope>REVIEW</scope>
    <scope>NOMENCLATURE</scope>
</reference>
<reference key="7">
    <citation type="journal article" date="2004" name="Nature">
        <title>Spermatid differentiation requires the assembly of a cell polarity complex downstream of junctional adhesion molecule-C.</title>
        <authorList>
            <person name="Gliki G."/>
            <person name="Ebnet K."/>
            <person name="Aurrand-Lions M."/>
            <person name="Imhof B.A."/>
            <person name="Adams R.H."/>
        </authorList>
    </citation>
    <scope>FUNCTION</scope>
    <scope>SUBCELLULAR LOCATION</scope>
    <scope>TISSUE SPECIFICITY</scope>
</reference>
<reference key="8">
    <citation type="journal article" date="2005" name="J. Invest. Dermatol.">
        <title>Junctional adhesion molecules (JAM)-B and -C contribute to leukocyte extravasation to the skin and mediate cutaneous inflammation.</title>
        <authorList>
            <person name="Ludwig R.J."/>
            <person name="Zollner T.M."/>
            <person name="Santoso S."/>
            <person name="Hardt K."/>
            <person name="Gille J."/>
            <person name="Baatz H."/>
            <person name="Johann P.S."/>
            <person name="Pfeffer J."/>
            <person name="Radeke H.H."/>
            <person name="Schoen M.P."/>
            <person name="Kaufmann R."/>
            <person name="Boehncke W.H."/>
            <person name="Podda M."/>
        </authorList>
    </citation>
    <scope>FUNCTION</scope>
    <scope>TISSUE SPECIFICITY</scope>
</reference>
<reference key="9">
    <citation type="journal article" date="2005" name="Mol. Biol. Cell">
        <title>Dual interaction of JAM-C with JAM-B and alpha(M)beta2 integrin: function in junctional complexes and leukocyte adhesion.</title>
        <authorList>
            <person name="Lamagna C."/>
            <person name="Meda P."/>
            <person name="Mandicourt G."/>
            <person name="Brown J."/>
            <person name="Gilbert R.J."/>
            <person name="Jones E.Y."/>
            <person name="Kiefer F."/>
            <person name="Ruga P."/>
            <person name="Imhof B.A."/>
            <person name="Aurrand-Lions M."/>
        </authorList>
    </citation>
    <scope>FUNCTION</scope>
    <scope>SUBCELLULAR LOCATION</scope>
</reference>
<reference key="10">
    <citation type="journal article" date="2009" name="Immunology">
        <title>Junctional adhesion molecule (JAM)-B supports lymphocyte rolling and adhesion through interaction with alpha4beta1 integrin.</title>
        <authorList>
            <person name="Ludwig R.J."/>
            <person name="Hardt K."/>
            <person name="Hatting M."/>
            <person name="Bistrian R."/>
            <person name="Diehl S."/>
            <person name="Radeke H.H."/>
            <person name="Podda M."/>
            <person name="Schoen M.P."/>
            <person name="Kaufmann R."/>
            <person name="Henschler R."/>
            <person name="Pfeilschifter J.M."/>
            <person name="Santoso S."/>
            <person name="Boehncke W.H."/>
        </authorList>
    </citation>
    <scope>FUNCTION</scope>
</reference>
<reference key="11">
    <citation type="journal article" date="2010" name="Cell">
        <title>A tissue-specific atlas of mouse protein phosphorylation and expression.</title>
        <authorList>
            <person name="Huttlin E.L."/>
            <person name="Jedrychowski M.P."/>
            <person name="Elias J.E."/>
            <person name="Goswami T."/>
            <person name="Rad R."/>
            <person name="Beausoleil S.A."/>
            <person name="Villen J."/>
            <person name="Haas W."/>
            <person name="Sowa M.E."/>
            <person name="Gygi S.P."/>
        </authorList>
    </citation>
    <scope>IDENTIFICATION BY MASS SPECTROMETRY [LARGE SCALE ANALYSIS]</scope>
    <source>
        <tissue>Brain</tissue>
    </source>
</reference>
<reference key="12">
    <citation type="journal article" date="2011" name="Blood">
        <title>JAM-B regulates maintenance of hematopoietic stem cells in the bone marrow.</title>
        <authorList>
            <person name="Arcangeli M.L."/>
            <person name="Frontera V."/>
            <person name="Bardin F."/>
            <person name="Obrados E."/>
            <person name="Adams S."/>
            <person name="Chabannon C."/>
            <person name="Schiff C."/>
            <person name="Mancini S.J."/>
            <person name="Adams R.H."/>
            <person name="Aurrand-Lions M."/>
        </authorList>
    </citation>
    <scope>FUNCTION</scope>
    <scope>TISSUE SPECIFICITY</scope>
    <scope>DISRUPTION PHENOTYPE</scope>
</reference>
<reference key="13">
    <citation type="journal article" date="2014" name="Stem Cells">
        <title>Function of Jam-B/Jam-C interaction in homing and mobilization of human and mouse hematopoietic stem and progenitor cells.</title>
        <authorList>
            <person name="Arcangeli M.L."/>
            <person name="Bardin F."/>
            <person name="Frontera V."/>
            <person name="Bidaut G."/>
            <person name="Obrados E."/>
            <person name="Adams R.H."/>
            <person name="Chabannon C."/>
            <person name="Aurrand-Lions M."/>
        </authorList>
    </citation>
    <scope>FUNCTION</scope>
</reference>
<reference key="14">
    <citation type="journal article" date="2015" name="Biochim. Biophys. Acta">
        <title>Transforming growth factor-beta3 regulates cell junction restructuring via MAPK-mediated mRNA destabilization and Smad-dependent protein degradation of junctional adhesion molecule B (JAM-B).</title>
        <authorList>
            <person name="Zhang X."/>
            <person name="Lui W.Y."/>
        </authorList>
    </citation>
    <scope>FUNCTION</scope>
    <scope>SUBCELLULAR LOCATION</scope>
    <scope>TISSUE SPECIFICITY</scope>
    <scope>UBIQUITINATION</scope>
</reference>
<reference key="15">
    <citation type="journal article" date="2015" name="FASEB J.">
        <title>Junctional adhesion molecule B interferes with angiogenic VEGF/VEGFR2 signaling.</title>
        <authorList>
            <person name="Meguenani M."/>
            <person name="Miljkovic-Licina M."/>
            <person name="Fagiani E."/>
            <person name="Ropraz P."/>
            <person name="Hammel P."/>
            <person name="Aurrand-Lions M."/>
            <person name="Adams R.H."/>
            <person name="Christofori G."/>
            <person name="Imhof B.A."/>
            <person name="Garrido-Urbani S."/>
        </authorList>
    </citation>
    <scope>FUNCTION</scope>
</reference>
<reference key="16">
    <citation type="journal article" date="2016" name="Neuron">
        <title>Somatodendritic Expression of JAM2 Inhibits Oligodendrocyte Myelination.</title>
        <authorList>
            <person name="Redmond S.A."/>
            <person name="Mei F."/>
            <person name="Eshed-Eisenbach Y."/>
            <person name="Osso L.A."/>
            <person name="Leshkowitz D."/>
            <person name="Shen Y.A."/>
            <person name="Kay J.N."/>
            <person name="Aurrand-Lions M."/>
            <person name="Lyons D.A."/>
            <person name="Peles E."/>
            <person name="Chan J.R."/>
        </authorList>
    </citation>
    <scope>FUNCTION</scope>
    <scope>SUBCELLULAR LOCATION</scope>
    <scope>TISSUE SPECIFICITY</scope>
    <scope>DISRUPTION PHENOTYPE</scope>
</reference>
<reference key="17">
    <citation type="journal article" date="2020" name="Am. J. Hum. Genet.">
        <title>Bi-allelic JAM2 Variants Lead to Early-Onset Recessive Primary Familial Brain Calcification.</title>
        <authorList>
            <consortium name="SYNAPS Study Group"/>
            <person name="Schottlaender L.V."/>
            <person name="Abeti R."/>
            <person name="Jaunmuktane Z."/>
            <person name="Macmillan C."/>
            <person name="Chelban V."/>
            <person name="O'Callaghan B."/>
            <person name="McKinley J."/>
            <person name="Maroofian R."/>
            <person name="Efthymiou S."/>
            <person name="Athanasiou-Fragkouli A."/>
            <person name="Forbes R."/>
            <person name="Soutar M.P.M."/>
            <person name="Livingston J.H."/>
            <person name="Kalmar B."/>
            <person name="Swayne O."/>
            <person name="Hotton G."/>
            <person name="Pittman A."/>
            <person name="Mendes de Oliveira J.R."/>
            <person name="de Grandis M."/>
            <person name="Richard-Loendt A."/>
            <person name="Launchbury F."/>
            <person name="Althonayan J."/>
            <person name="McDonnell G."/>
            <person name="Carr A."/>
            <person name="Khan S."/>
            <person name="Beetz C."/>
            <person name="Bisgin A."/>
            <person name="Tug Bozdogan S."/>
            <person name="Begtrup A."/>
            <person name="Torti E."/>
            <person name="Greensmith L."/>
            <person name="Giunti P."/>
            <person name="Morrison P.J."/>
            <person name="Brandner S."/>
            <person name="Aurrand-Lions M."/>
            <person name="Houlden H."/>
        </authorList>
    </citation>
    <scope>DISRUPTION PHENOTYPE</scope>
</reference>
<feature type="signal peptide" evidence="5">
    <location>
        <begin position="1"/>
        <end position="28"/>
    </location>
</feature>
<feature type="chain" id="PRO_0000015070" description="Junctional adhesion molecule B">
    <location>
        <begin position="29"/>
        <end position="298"/>
    </location>
</feature>
<feature type="topological domain" description="Extracellular" evidence="3">
    <location>
        <begin position="29"/>
        <end position="236"/>
    </location>
</feature>
<feature type="transmembrane region" description="Helical" evidence="3">
    <location>
        <begin position="237"/>
        <end position="257"/>
    </location>
</feature>
<feature type="topological domain" description="Cytoplasmic" evidence="3">
    <location>
        <begin position="258"/>
        <end position="298"/>
    </location>
</feature>
<feature type="domain" description="Ig-like V-type" evidence="4">
    <location>
        <begin position="32"/>
        <end position="128"/>
    </location>
</feature>
<feature type="domain" description="Ig-like C2-type" evidence="4">
    <location>
        <begin position="135"/>
        <end position="238"/>
    </location>
</feature>
<feature type="glycosylation site" description="N-linked (GlcNAc...) asparagine" evidence="3">
    <location>
        <position position="99"/>
    </location>
</feature>
<feature type="disulfide bond" evidence="4">
    <location>
        <begin position="51"/>
        <end position="110"/>
    </location>
</feature>
<feature type="disulfide bond" evidence="4">
    <location>
        <begin position="156"/>
        <end position="214"/>
    </location>
</feature>
<feature type="sequence conflict" description="In Ref. 3; BAC26102." evidence="19" ref="3">
    <original>V</original>
    <variation>M</variation>
    <location>
        <position position="133"/>
    </location>
</feature>
<feature type="sequence conflict" description="In Ref. 3; BAC37139." evidence="19" ref="3">
    <original>T</original>
    <variation>H</variation>
    <location>
        <position position="174"/>
    </location>
</feature>
<feature type="sequence conflict" description="In Ref. 3; BAC37139." evidence="19" ref="3">
    <original>G</original>
    <variation>R</variation>
    <location>
        <position position="183"/>
    </location>
</feature>
<feature type="strand" evidence="23">
    <location>
        <begin position="296"/>
        <end position="298"/>
    </location>
</feature>
<evidence type="ECO:0000250" key="1">
    <source>
        <dbReference type="UniProtKB" id="A0A0R4IGV4"/>
    </source>
</evidence>
<evidence type="ECO:0000250" key="2">
    <source>
        <dbReference type="UniProtKB" id="P57087"/>
    </source>
</evidence>
<evidence type="ECO:0000255" key="3"/>
<evidence type="ECO:0000255" key="4">
    <source>
        <dbReference type="PROSITE-ProRule" id="PRU00114"/>
    </source>
</evidence>
<evidence type="ECO:0000269" key="5">
    <source>
    </source>
</evidence>
<evidence type="ECO:0000269" key="6">
    <source>
    </source>
</evidence>
<evidence type="ECO:0000269" key="7">
    <source>
    </source>
</evidence>
<evidence type="ECO:0000269" key="8">
    <source>
    </source>
</evidence>
<evidence type="ECO:0000269" key="9">
    <source>
    </source>
</evidence>
<evidence type="ECO:0000269" key="10">
    <source>
    </source>
</evidence>
<evidence type="ECO:0000269" key="11">
    <source>
    </source>
</evidence>
<evidence type="ECO:0000269" key="12">
    <source>
    </source>
</evidence>
<evidence type="ECO:0000269" key="13">
    <source>
    </source>
</evidence>
<evidence type="ECO:0000269" key="14">
    <source>
    </source>
</evidence>
<evidence type="ECO:0000269" key="15">
    <source>
    </source>
</evidence>
<evidence type="ECO:0000269" key="16">
    <source>
    </source>
</evidence>
<evidence type="ECO:0000303" key="17">
    <source>
    </source>
</evidence>
<evidence type="ECO:0000303" key="18">
    <source>
    </source>
</evidence>
<evidence type="ECO:0000305" key="19"/>
<evidence type="ECO:0000305" key="20">
    <source>
    </source>
</evidence>
<evidence type="ECO:0000305" key="21">
    <source>
    </source>
</evidence>
<evidence type="ECO:0000312" key="22">
    <source>
        <dbReference type="MGI" id="MGI:1933820"/>
    </source>
</evidence>
<evidence type="ECO:0007829" key="23">
    <source>
        <dbReference type="PDB" id="5GMJ"/>
    </source>
</evidence>
<dbReference type="EMBL" id="AF255911">
    <property type="protein sequence ID" value="AAF81224.1"/>
    <property type="molecule type" value="mRNA"/>
</dbReference>
<dbReference type="EMBL" id="AJ291757">
    <property type="protein sequence ID" value="CAC20699.1"/>
    <property type="molecule type" value="mRNA"/>
</dbReference>
<dbReference type="EMBL" id="AK010616">
    <property type="protein sequence ID" value="BAB27064.1"/>
    <property type="molecule type" value="mRNA"/>
</dbReference>
<dbReference type="EMBL" id="AK013914">
    <property type="protein sequence ID" value="BAB29053.1"/>
    <property type="molecule type" value="mRNA"/>
</dbReference>
<dbReference type="EMBL" id="AK028757">
    <property type="protein sequence ID" value="BAC26102.1"/>
    <property type="molecule type" value="mRNA"/>
</dbReference>
<dbReference type="EMBL" id="AK078128">
    <property type="protein sequence ID" value="BAC37139.1"/>
    <property type="molecule type" value="mRNA"/>
</dbReference>
<dbReference type="EMBL" id="AC164162">
    <property type="status" value="NOT_ANNOTATED_CDS"/>
    <property type="molecule type" value="Genomic_DNA"/>
</dbReference>
<dbReference type="EMBL" id="CT027693">
    <property type="status" value="NOT_ANNOTATED_CDS"/>
    <property type="molecule type" value="Genomic_DNA"/>
</dbReference>
<dbReference type="EMBL" id="BC028778">
    <property type="protein sequence ID" value="AAH28778.1"/>
    <property type="molecule type" value="mRNA"/>
</dbReference>
<dbReference type="CCDS" id="CCDS37381.1"/>
<dbReference type="RefSeq" id="NP_076333.3">
    <property type="nucleotide sequence ID" value="NM_023844.5"/>
</dbReference>
<dbReference type="PDB" id="5GMJ">
    <property type="method" value="X-ray"/>
    <property type="resolution" value="2.99 A"/>
    <property type="chains" value="C/D=280-298"/>
</dbReference>
<dbReference type="PDBsum" id="5GMJ"/>
<dbReference type="SMR" id="Q9JI59"/>
<dbReference type="BioGRID" id="212143">
    <property type="interactions" value="1"/>
</dbReference>
<dbReference type="DIP" id="DIP-61078N"/>
<dbReference type="FunCoup" id="Q9JI59">
    <property type="interactions" value="252"/>
</dbReference>
<dbReference type="IntAct" id="Q9JI59">
    <property type="interactions" value="1"/>
</dbReference>
<dbReference type="STRING" id="10090.ENSMUSP00000109833"/>
<dbReference type="GlyConnect" id="2447">
    <property type="glycosylation" value="1 N-Linked glycan (1 site)"/>
</dbReference>
<dbReference type="GlyCosmos" id="Q9JI59">
    <property type="glycosylation" value="2 sites, 1 glycan"/>
</dbReference>
<dbReference type="GlyGen" id="Q9JI59">
    <property type="glycosylation" value="3 sites, 4 N-linked glycans (3 sites)"/>
</dbReference>
<dbReference type="iPTMnet" id="Q9JI59"/>
<dbReference type="PhosphoSitePlus" id="Q9JI59"/>
<dbReference type="SwissPalm" id="Q9JI59"/>
<dbReference type="PaxDb" id="10090-ENSMUSP00000109833"/>
<dbReference type="PeptideAtlas" id="Q9JI59"/>
<dbReference type="ProteomicsDB" id="269358"/>
<dbReference type="Antibodypedia" id="4909">
    <property type="antibodies" value="470 antibodies from 37 providers"/>
</dbReference>
<dbReference type="DNASU" id="67374"/>
<dbReference type="Ensembl" id="ENSMUST00000114195.8">
    <property type="protein sequence ID" value="ENSMUSP00000109833.2"/>
    <property type="gene ID" value="ENSMUSG00000053062.17"/>
</dbReference>
<dbReference type="GeneID" id="67374"/>
<dbReference type="KEGG" id="mmu:67374"/>
<dbReference type="UCSC" id="uc007ztg.2">
    <property type="organism name" value="mouse"/>
</dbReference>
<dbReference type="AGR" id="MGI:1933820"/>
<dbReference type="CTD" id="58494"/>
<dbReference type="MGI" id="MGI:1933820">
    <property type="gene designation" value="Jam2"/>
</dbReference>
<dbReference type="VEuPathDB" id="HostDB:ENSMUSG00000053062"/>
<dbReference type="eggNOG" id="ENOG502QZ6E">
    <property type="taxonomic scope" value="Eukaryota"/>
</dbReference>
<dbReference type="GeneTree" id="ENSGT00940000160634"/>
<dbReference type="HOGENOM" id="CLU_067351_0_0_1"/>
<dbReference type="InParanoid" id="Q9JI59"/>
<dbReference type="OMA" id="APEYVWF"/>
<dbReference type="PhylomeDB" id="Q9JI59"/>
<dbReference type="TreeFam" id="TF331459"/>
<dbReference type="Reactome" id="R-MMU-202733">
    <property type="pathway name" value="Cell surface interactions at the vascular wall"/>
</dbReference>
<dbReference type="Reactome" id="R-MMU-216083">
    <property type="pathway name" value="Integrin cell surface interactions"/>
</dbReference>
<dbReference type="BioGRID-ORCS" id="67374">
    <property type="hits" value="2 hits in 76 CRISPR screens"/>
</dbReference>
<dbReference type="PRO" id="PR:Q9JI59"/>
<dbReference type="Proteomes" id="UP000000589">
    <property type="component" value="Chromosome 16"/>
</dbReference>
<dbReference type="RNAct" id="Q9JI59">
    <property type="molecule type" value="protein"/>
</dbReference>
<dbReference type="Bgee" id="ENSMUSG00000053062">
    <property type="expression patterns" value="Expressed in interventricular septum and 221 other cell types or tissues"/>
</dbReference>
<dbReference type="ExpressionAtlas" id="Q9JI59">
    <property type="expression patterns" value="baseline and differential"/>
</dbReference>
<dbReference type="GO" id="GO:0005923">
    <property type="term" value="C:bicellular tight junction"/>
    <property type="evidence" value="ECO:0007669"/>
    <property type="project" value="UniProtKB-SubCell"/>
</dbReference>
<dbReference type="GO" id="GO:0009986">
    <property type="term" value="C:cell surface"/>
    <property type="evidence" value="ECO:0000314"/>
    <property type="project" value="ARUK-UCL"/>
</dbReference>
<dbReference type="GO" id="GO:0005886">
    <property type="term" value="C:plasma membrane"/>
    <property type="evidence" value="ECO:0000250"/>
    <property type="project" value="UniProtKB"/>
</dbReference>
<dbReference type="GO" id="GO:0098636">
    <property type="term" value="C:protein complex involved in cell adhesion"/>
    <property type="evidence" value="ECO:0000250"/>
    <property type="project" value="UniProtKB"/>
</dbReference>
<dbReference type="GO" id="GO:0036477">
    <property type="term" value="C:somatodendritic compartment"/>
    <property type="evidence" value="ECO:0000314"/>
    <property type="project" value="UniProtKB"/>
</dbReference>
<dbReference type="GO" id="GO:0070160">
    <property type="term" value="C:tight junction"/>
    <property type="evidence" value="ECO:0000314"/>
    <property type="project" value="UniProtKB"/>
</dbReference>
<dbReference type="GO" id="GO:0005178">
    <property type="term" value="F:integrin binding"/>
    <property type="evidence" value="ECO:0000250"/>
    <property type="project" value="UniProtKB"/>
</dbReference>
<dbReference type="GO" id="GO:0098609">
    <property type="term" value="P:cell-cell adhesion"/>
    <property type="evidence" value="ECO:0000315"/>
    <property type="project" value="UniProtKB"/>
</dbReference>
<dbReference type="GO" id="GO:0045123">
    <property type="term" value="P:cellular extravasation"/>
    <property type="evidence" value="ECO:0000314"/>
    <property type="project" value="UniProtKB"/>
</dbReference>
<dbReference type="GO" id="GO:0097241">
    <property type="term" value="P:hematopoietic stem cell migration to bone marrow"/>
    <property type="evidence" value="ECO:0000315"/>
    <property type="project" value="UniProtKB"/>
</dbReference>
<dbReference type="GO" id="GO:0050901">
    <property type="term" value="P:leukocyte tethering or rolling"/>
    <property type="evidence" value="ECO:0000314"/>
    <property type="project" value="ARUK-UCL"/>
</dbReference>
<dbReference type="GO" id="GO:0007162">
    <property type="term" value="P:negative regulation of cell adhesion"/>
    <property type="evidence" value="ECO:0000316"/>
    <property type="project" value="MGI"/>
</dbReference>
<dbReference type="GO" id="GO:0031642">
    <property type="term" value="P:negative regulation of myelination"/>
    <property type="evidence" value="ECO:0000315"/>
    <property type="project" value="UniProtKB"/>
</dbReference>
<dbReference type="GO" id="GO:2000403">
    <property type="term" value="P:positive regulation of lymphocyte migration"/>
    <property type="evidence" value="ECO:0000315"/>
    <property type="project" value="ARUK-UCL"/>
</dbReference>
<dbReference type="GO" id="GO:0007286">
    <property type="term" value="P:spermatid development"/>
    <property type="evidence" value="ECO:0000314"/>
    <property type="project" value="UniProtKB"/>
</dbReference>
<dbReference type="FunFam" id="2.60.40.10:FF:001393">
    <property type="entry name" value="Junctional adhesion molecule 2"/>
    <property type="match status" value="1"/>
</dbReference>
<dbReference type="FunFam" id="2.60.40.10:FF:000342">
    <property type="entry name" value="Junctional adhesion molecule A"/>
    <property type="match status" value="1"/>
</dbReference>
<dbReference type="Gene3D" id="2.60.40.10">
    <property type="entry name" value="Immunoglobulins"/>
    <property type="match status" value="2"/>
</dbReference>
<dbReference type="InterPro" id="IPR007110">
    <property type="entry name" value="Ig-like_dom"/>
</dbReference>
<dbReference type="InterPro" id="IPR036179">
    <property type="entry name" value="Ig-like_dom_sf"/>
</dbReference>
<dbReference type="InterPro" id="IPR013783">
    <property type="entry name" value="Ig-like_fold"/>
</dbReference>
<dbReference type="InterPro" id="IPR003599">
    <property type="entry name" value="Ig_sub"/>
</dbReference>
<dbReference type="InterPro" id="IPR003598">
    <property type="entry name" value="Ig_sub2"/>
</dbReference>
<dbReference type="InterPro" id="IPR013106">
    <property type="entry name" value="Ig_V-set"/>
</dbReference>
<dbReference type="InterPro" id="IPR042625">
    <property type="entry name" value="JAM2"/>
</dbReference>
<dbReference type="PANTHER" id="PTHR44663">
    <property type="entry name" value="JUNCTIONAL ADHESION MOLECULE B"/>
    <property type="match status" value="1"/>
</dbReference>
<dbReference type="PANTHER" id="PTHR44663:SF2">
    <property type="entry name" value="JUNCTIONAL ADHESION MOLECULE B"/>
    <property type="match status" value="1"/>
</dbReference>
<dbReference type="Pfam" id="PF13927">
    <property type="entry name" value="Ig_3"/>
    <property type="match status" value="1"/>
</dbReference>
<dbReference type="Pfam" id="PF07686">
    <property type="entry name" value="V-set"/>
    <property type="match status" value="1"/>
</dbReference>
<dbReference type="SMART" id="SM00409">
    <property type="entry name" value="IG"/>
    <property type="match status" value="2"/>
</dbReference>
<dbReference type="SMART" id="SM00408">
    <property type="entry name" value="IGc2"/>
    <property type="match status" value="2"/>
</dbReference>
<dbReference type="SMART" id="SM00406">
    <property type="entry name" value="IGv"/>
    <property type="match status" value="1"/>
</dbReference>
<dbReference type="SUPFAM" id="SSF48726">
    <property type="entry name" value="Immunoglobulin"/>
    <property type="match status" value="2"/>
</dbReference>
<dbReference type="PROSITE" id="PS50835">
    <property type="entry name" value="IG_LIKE"/>
    <property type="match status" value="2"/>
</dbReference>
<organism>
    <name type="scientific">Mus musculus</name>
    <name type="common">Mouse</name>
    <dbReference type="NCBI Taxonomy" id="10090"/>
    <lineage>
        <taxon>Eukaryota</taxon>
        <taxon>Metazoa</taxon>
        <taxon>Chordata</taxon>
        <taxon>Craniata</taxon>
        <taxon>Vertebrata</taxon>
        <taxon>Euteleostomi</taxon>
        <taxon>Mammalia</taxon>
        <taxon>Eutheria</taxon>
        <taxon>Euarchontoglires</taxon>
        <taxon>Glires</taxon>
        <taxon>Rodentia</taxon>
        <taxon>Myomorpha</taxon>
        <taxon>Muroidea</taxon>
        <taxon>Muridae</taxon>
        <taxon>Murinae</taxon>
        <taxon>Mus</taxon>
        <taxon>Mus</taxon>
    </lineage>
</organism>
<gene>
    <name evidence="22" type="primary">Jam2</name>
    <name evidence="17" type="synonym">Vejam</name>
</gene>
<protein>
    <recommendedName>
        <fullName>Junctional adhesion molecule B</fullName>
        <shortName>JAM-B</shortName>
    </recommendedName>
    <alternativeName>
        <fullName evidence="18">Junctional adhesion molecule 2</fullName>
        <shortName evidence="18">JAM-2</shortName>
    </alternativeName>
    <alternativeName>
        <fullName evidence="17">Vascular endothelial junction-associated molecule</fullName>
        <shortName evidence="17">VE-JAM</shortName>
    </alternativeName>
    <cdAntigenName>CD322</cdAntigenName>
</protein>
<name>JAM2_MOUSE</name>
<comment type="function">
    <text evidence="1 8 9 10 11 12 14 15 20 21">Junctional adhesion protein that mediates heterotypic cell-cell interactions with its cognate receptor JAM3 to regulate different cellular processes (PubMed:16093349, PubMed:21868569, PubMed:24357068). Plays a role in homing and mobilization of hematopoietic stem and progenitor cells within the bone marrow (PubMed:21868569, PubMed:24357068). At the surface of bone marrow stromal cells, it contributes to the retention of the hematopoietic stem and progenitor cells expressing JAM3 (PubMed:21868569, PubMed:24357068). Plays a central role in leukocytes extravasation by facilitating not only transmigration but also tethering and rolling of leukocytes along the endothelium (PubMed:16297198, PubMed:19740376). Tethering and rolling of leukocytes are dependent on the binding by JAM2 of the integrin alpha-4/beta-1 (PubMed:19740376). Plays a role in spermatogenesis where JAM2 and JAM3, which are respectively expressed by Sertoli and germ cells, mediate an interaction between both cell types and play an essential role in the anchorage of germ cells onto Sertoli cells and the assembly of cell polarity complexes during spermatid differentiation (Probable). Also functions as an inhibitory somatodendritic cue that prevents the myelination of non-axonal parts of neurons (PubMed:27499083). During myogenesis, it is involved in myocyte fusion (By similarity). May also play a role in angiogenesis (PubMed:25911611).</text>
</comment>
<comment type="subcellular location">
    <subcellularLocation>
        <location evidence="6 13">Cell membrane</location>
        <topology evidence="2">Single-pass type I membrane protein</topology>
    </subcellularLocation>
    <subcellularLocation>
        <location evidence="8 13">Cell junction</location>
    </subcellularLocation>
    <subcellularLocation>
        <location evidence="6 7">Cell junction</location>
        <location evidence="6 7">Tight junction</location>
    </subcellularLocation>
    <text evidence="6 15">Localized at tight junctions of both epithelial, endothelial cells and Sertoli cells (PubMed:11036763). Specifically localized within the somatodendritic compartment of neurons and excluded from the axon (PubMed:27499083).</text>
</comment>
<comment type="tissue specificity">
    <text evidence="7 9 11 13 15">Expressed by bone marrow stromal cells (at protein level) (PubMed:21868569). Expressed in skin (at protein level) (PubMed:16297198). Expressed in testis by Sertoli cells (at protein level) (PubMed:15372036, PubMed:25817991). Expressed by dorsal root ganglion and spinal cord neurons (PubMed:27499083).</text>
</comment>
<comment type="domain">
    <text evidence="2">The Ig-like V-type domain is necessary and sufficient to mediate interaction with JAM3 and integrin alpha-4/beta-1.</text>
</comment>
<comment type="PTM">
    <text evidence="13">The expression in Sertoli cells is regulated by TGFB3 through ubiquitin-mediated proteasomal degradation.</text>
</comment>
<comment type="disruption phenotype">
    <text evidence="11 15 16">Mice lacking Jam2 do not display overt morphological, vascular or immunologic phenotype (PubMed:21868569). However, aberrant myelination of dorsal horn interneuron cell bodies is observed (PubMed:21868569, PubMed:27499083). They develop age-dependent significant walking and gait abnormalities compared to controls. Neuropathologic brain analysis show age-dependent progressive prominent vacuolization in the midbrain, thalamus, and cerebral and cerebellar cortices. These changes are associated with reactive astrogliosis, microglial activation, and a reduced neuronal density. Similar findings are observed in spinal cord sections. There is no evidence of mineralization or calcification in the brain or spinal cord of mutant mice (PubMed:32142645).</text>
</comment>
<comment type="similarity">
    <text evidence="19">Belongs to the immunoglobulin superfamily.</text>
</comment>
<proteinExistence type="evidence at protein level"/>
<accession>Q9JI59</accession>
<accession>A6X955</accession>
<accession>Q8C5K9</accession>
<accession>Q8CE95</accession>
<sequence length="298" mass="33047">MARSPQGLLMLLLLHYLIVALDYHKANGFSASKDHRQEVTVIEFQEAILACKTPKKTTSSRLEWKKVGQGVSLVYYQQALQGDFKDRAEMIDFNIRIKNVTRSDAGEYRCEVSAPTEQGQNLQEDKVMLEVLVAPAVPACEVPTSVMTGSVVELRCQDKEGNPAPEYIWFKDGTSLLGNPKGGTHNNSSYTMNTKSGILQFNMISKMDSGEYYCEARNSVGHRRCPGKRMQVDVLNISGIIATVVVVAFVISVCGLGTCYAQRKGYFSKETSFQKGSPASKVTTMSENDFKHTKSFII</sequence>